<protein>
    <recommendedName>
        <fullName evidence="1">Uridylate kinase</fullName>
        <shortName evidence="1">UK</shortName>
        <ecNumber evidence="1">2.7.4.22</ecNumber>
    </recommendedName>
    <alternativeName>
        <fullName evidence="1">Uridine monophosphate kinase</fullName>
        <shortName evidence="1">UMP kinase</shortName>
        <shortName evidence="1">UMPK</shortName>
    </alternativeName>
</protein>
<keyword id="KW-0021">Allosteric enzyme</keyword>
<keyword id="KW-0067">ATP-binding</keyword>
<keyword id="KW-0963">Cytoplasm</keyword>
<keyword id="KW-0418">Kinase</keyword>
<keyword id="KW-0547">Nucleotide-binding</keyword>
<keyword id="KW-0665">Pyrimidine biosynthesis</keyword>
<keyword id="KW-0808">Transferase</keyword>
<reference key="1">
    <citation type="submission" date="2006-12" db="EMBL/GenBank/DDBJ databases">
        <authorList>
            <person name="Fouts D.E."/>
            <person name="Nelson K.E."/>
            <person name="Sebastian Y."/>
        </authorList>
    </citation>
    <scope>NUCLEOTIDE SEQUENCE [LARGE SCALE GENOMIC DNA]</scope>
    <source>
        <strain>81-176</strain>
    </source>
</reference>
<name>PYRH_CAMJJ</name>
<evidence type="ECO:0000255" key="1">
    <source>
        <dbReference type="HAMAP-Rule" id="MF_01220"/>
    </source>
</evidence>
<comment type="function">
    <text evidence="1">Catalyzes the reversible phosphorylation of UMP to UDP.</text>
</comment>
<comment type="catalytic activity">
    <reaction evidence="1">
        <text>UMP + ATP = UDP + ADP</text>
        <dbReference type="Rhea" id="RHEA:24400"/>
        <dbReference type="ChEBI" id="CHEBI:30616"/>
        <dbReference type="ChEBI" id="CHEBI:57865"/>
        <dbReference type="ChEBI" id="CHEBI:58223"/>
        <dbReference type="ChEBI" id="CHEBI:456216"/>
        <dbReference type="EC" id="2.7.4.22"/>
    </reaction>
</comment>
<comment type="activity regulation">
    <text evidence="1">Allosterically activated by GTP. Inhibited by UTP.</text>
</comment>
<comment type="pathway">
    <text evidence="1">Pyrimidine metabolism; CTP biosynthesis via de novo pathway; UDP from UMP (UMPK route): step 1/1.</text>
</comment>
<comment type="subunit">
    <text evidence="1">Homohexamer.</text>
</comment>
<comment type="subcellular location">
    <subcellularLocation>
        <location evidence="1">Cytoplasm</location>
    </subcellularLocation>
</comment>
<comment type="similarity">
    <text evidence="1">Belongs to the UMP kinase family.</text>
</comment>
<dbReference type="EC" id="2.7.4.22" evidence="1"/>
<dbReference type="EMBL" id="CP000538">
    <property type="protein sequence ID" value="EAQ72635.1"/>
    <property type="molecule type" value="Genomic_DNA"/>
</dbReference>
<dbReference type="RefSeq" id="WP_002854049.1">
    <property type="nucleotide sequence ID" value="NC_008787.1"/>
</dbReference>
<dbReference type="SMR" id="A1W0Q9"/>
<dbReference type="KEGG" id="cjj:CJJ81176_1290"/>
<dbReference type="eggNOG" id="COG0528">
    <property type="taxonomic scope" value="Bacteria"/>
</dbReference>
<dbReference type="HOGENOM" id="CLU_033861_0_0_7"/>
<dbReference type="UniPathway" id="UPA00159">
    <property type="reaction ID" value="UER00275"/>
</dbReference>
<dbReference type="Proteomes" id="UP000000646">
    <property type="component" value="Chromosome"/>
</dbReference>
<dbReference type="GO" id="GO:0005829">
    <property type="term" value="C:cytosol"/>
    <property type="evidence" value="ECO:0007669"/>
    <property type="project" value="TreeGrafter"/>
</dbReference>
<dbReference type="GO" id="GO:0005524">
    <property type="term" value="F:ATP binding"/>
    <property type="evidence" value="ECO:0007669"/>
    <property type="project" value="UniProtKB-KW"/>
</dbReference>
<dbReference type="GO" id="GO:0033862">
    <property type="term" value="F:UMP kinase activity"/>
    <property type="evidence" value="ECO:0007669"/>
    <property type="project" value="UniProtKB-EC"/>
</dbReference>
<dbReference type="GO" id="GO:0044210">
    <property type="term" value="P:'de novo' CTP biosynthetic process"/>
    <property type="evidence" value="ECO:0007669"/>
    <property type="project" value="UniProtKB-UniRule"/>
</dbReference>
<dbReference type="GO" id="GO:0006225">
    <property type="term" value="P:UDP biosynthetic process"/>
    <property type="evidence" value="ECO:0007669"/>
    <property type="project" value="TreeGrafter"/>
</dbReference>
<dbReference type="CDD" id="cd04254">
    <property type="entry name" value="AAK_UMPK-PyrH-Ec"/>
    <property type="match status" value="1"/>
</dbReference>
<dbReference type="FunFam" id="3.40.1160.10:FF:000001">
    <property type="entry name" value="Uridylate kinase"/>
    <property type="match status" value="1"/>
</dbReference>
<dbReference type="Gene3D" id="3.40.1160.10">
    <property type="entry name" value="Acetylglutamate kinase-like"/>
    <property type="match status" value="1"/>
</dbReference>
<dbReference type="HAMAP" id="MF_01220_B">
    <property type="entry name" value="PyrH_B"/>
    <property type="match status" value="1"/>
</dbReference>
<dbReference type="InterPro" id="IPR036393">
    <property type="entry name" value="AceGlu_kinase-like_sf"/>
</dbReference>
<dbReference type="InterPro" id="IPR001048">
    <property type="entry name" value="Asp/Glu/Uridylate_kinase"/>
</dbReference>
<dbReference type="InterPro" id="IPR011817">
    <property type="entry name" value="Uridylate_kinase"/>
</dbReference>
<dbReference type="InterPro" id="IPR015963">
    <property type="entry name" value="Uridylate_kinase_bac"/>
</dbReference>
<dbReference type="NCBIfam" id="TIGR02075">
    <property type="entry name" value="pyrH_bact"/>
    <property type="match status" value="1"/>
</dbReference>
<dbReference type="PANTHER" id="PTHR42833">
    <property type="entry name" value="URIDYLATE KINASE"/>
    <property type="match status" value="1"/>
</dbReference>
<dbReference type="PANTHER" id="PTHR42833:SF4">
    <property type="entry name" value="URIDYLATE KINASE PUMPKIN, CHLOROPLASTIC"/>
    <property type="match status" value="1"/>
</dbReference>
<dbReference type="Pfam" id="PF00696">
    <property type="entry name" value="AA_kinase"/>
    <property type="match status" value="1"/>
</dbReference>
<dbReference type="PIRSF" id="PIRSF005650">
    <property type="entry name" value="Uridylate_kin"/>
    <property type="match status" value="1"/>
</dbReference>
<dbReference type="SUPFAM" id="SSF53633">
    <property type="entry name" value="Carbamate kinase-like"/>
    <property type="match status" value="1"/>
</dbReference>
<proteinExistence type="inferred from homology"/>
<accession>A1W0Q9</accession>
<gene>
    <name evidence="1" type="primary">pyrH</name>
    <name type="ordered locus">CJJ81176_1290</name>
</gene>
<feature type="chain" id="PRO_1000053902" description="Uridylate kinase">
    <location>
        <begin position="1"/>
        <end position="239"/>
    </location>
</feature>
<feature type="region of interest" description="Involved in allosteric activation by GTP" evidence="1">
    <location>
        <begin position="18"/>
        <end position="23"/>
    </location>
</feature>
<feature type="binding site" evidence="1">
    <location>
        <begin position="10"/>
        <end position="13"/>
    </location>
    <ligand>
        <name>ATP</name>
        <dbReference type="ChEBI" id="CHEBI:30616"/>
    </ligand>
</feature>
<feature type="binding site" evidence="1">
    <location>
        <position position="52"/>
    </location>
    <ligand>
        <name>UMP</name>
        <dbReference type="ChEBI" id="CHEBI:57865"/>
    </ligand>
</feature>
<feature type="binding site" evidence="1">
    <location>
        <position position="53"/>
    </location>
    <ligand>
        <name>ATP</name>
        <dbReference type="ChEBI" id="CHEBI:30616"/>
    </ligand>
</feature>
<feature type="binding site" evidence="1">
    <location>
        <position position="57"/>
    </location>
    <ligand>
        <name>ATP</name>
        <dbReference type="ChEBI" id="CHEBI:30616"/>
    </ligand>
</feature>
<feature type="binding site" evidence="1">
    <location>
        <position position="73"/>
    </location>
    <ligand>
        <name>UMP</name>
        <dbReference type="ChEBI" id="CHEBI:57865"/>
    </ligand>
</feature>
<feature type="binding site" evidence="1">
    <location>
        <begin position="134"/>
        <end position="141"/>
    </location>
    <ligand>
        <name>UMP</name>
        <dbReference type="ChEBI" id="CHEBI:57865"/>
    </ligand>
</feature>
<feature type="binding site" evidence="1">
    <location>
        <position position="161"/>
    </location>
    <ligand>
        <name>ATP</name>
        <dbReference type="ChEBI" id="CHEBI:30616"/>
    </ligand>
</feature>
<feature type="binding site" evidence="1">
    <location>
        <position position="167"/>
    </location>
    <ligand>
        <name>ATP</name>
        <dbReference type="ChEBI" id="CHEBI:30616"/>
    </ligand>
</feature>
<feature type="binding site" evidence="1">
    <location>
        <position position="170"/>
    </location>
    <ligand>
        <name>ATP</name>
        <dbReference type="ChEBI" id="CHEBI:30616"/>
    </ligand>
</feature>
<sequence>MQERKRVLVKFSGEALAGENGFGIENSILKFIASEIKELIKNQIEVGIVIGGGNIIRGVSAAKGGLIKRTSGDHMGMLATVINAIAIQEALESSGLEVRVQSAIQMEAFCETYIMRRAQRHLEKGRVVVFAAGTGNPYFTTDTTAILRAVEIDADMVIKATKVNGVYDKDPKQFDDAVFLNTLSYDEAMQDNIKVMDDTAIALAKDNKLPIVVCNMFEEGNLLKIIQGDTSLCSIVKNN</sequence>
<organism>
    <name type="scientific">Campylobacter jejuni subsp. jejuni serotype O:23/36 (strain 81-176)</name>
    <dbReference type="NCBI Taxonomy" id="354242"/>
    <lineage>
        <taxon>Bacteria</taxon>
        <taxon>Pseudomonadati</taxon>
        <taxon>Campylobacterota</taxon>
        <taxon>Epsilonproteobacteria</taxon>
        <taxon>Campylobacterales</taxon>
        <taxon>Campylobacteraceae</taxon>
        <taxon>Campylobacter</taxon>
    </lineage>
</organism>